<reference key="1">
    <citation type="journal article" date="1996" name="FEBS Lett.">
        <title>Identification by bacterial expression and functional reconstitution of the yeast genomic sequence encoding the mitochondrial dicarboxylate carrier protein.</title>
        <authorList>
            <person name="Palmieri L."/>
            <person name="Palmieri F."/>
            <person name="Runswick M.J."/>
            <person name="Walker J.E."/>
        </authorList>
    </citation>
    <scope>NUCLEOTIDE SEQUENCE [MRNA]</scope>
    <source>
        <tissue evidence="11">Liver</tissue>
    </source>
</reference>
<reference key="2">
    <citation type="journal article" date="1998" name="J. Biol. Chem.">
        <title>The sequence, bacterial expression, and functional reconstitution of the rat mitochondrial dicarboxylate transporter cloned via distant homologs in yeast and Caenorhabditis elegans.</title>
        <authorList>
            <person name="Fiermonte G."/>
            <person name="Palmieri L."/>
            <person name="Dolce V."/>
            <person name="Lasorsa F.M."/>
            <person name="Palmieri F."/>
            <person name="Runswick M.J."/>
            <person name="Walker J.E."/>
        </authorList>
    </citation>
    <scope>NUCLEOTIDE SEQUENCE [MRNA]</scope>
    <scope>FUNCTION</scope>
    <scope>TISSUE SPECIFICITY</scope>
    <scope>TRANSPORT ACTIVITY</scope>
    <source>
        <tissue evidence="11">Liver</tissue>
    </source>
</reference>
<reference key="3">
    <citation type="journal article" date="2004" name="Genome Res.">
        <title>The status, quality, and expansion of the NIH full-length cDNA project: the Mammalian Gene Collection (MGC).</title>
        <authorList>
            <consortium name="The MGC Project Team"/>
        </authorList>
    </citation>
    <scope>NUCLEOTIDE SEQUENCE [LARGE SCALE MRNA]</scope>
    <source>
        <tissue evidence="10">Kidney</tissue>
    </source>
</reference>
<reference key="4">
    <citation type="journal article" date="2004" name="Nature">
        <title>Genome sequence of the Brown Norway rat yields insights into mammalian evolution.</title>
        <authorList>
            <person name="Gibbs R.A."/>
            <person name="Weinstock G.M."/>
            <person name="Metzker M.L."/>
            <person name="Muzny D.M."/>
            <person name="Sodergren E.J."/>
            <person name="Scherer S."/>
            <person name="Scott G."/>
            <person name="Steffen D."/>
            <person name="Worley K.C."/>
            <person name="Burch P.E."/>
            <person name="Okwuonu G."/>
            <person name="Hines S."/>
            <person name="Lewis L."/>
            <person name="Deramo C."/>
            <person name="Delgado O."/>
            <person name="Dugan-Rocha S."/>
            <person name="Miner G."/>
            <person name="Morgan M."/>
            <person name="Hawes A."/>
            <person name="Gill R."/>
            <person name="Holt R.A."/>
            <person name="Adams M.D."/>
            <person name="Amanatides P.G."/>
            <person name="Baden-Tillson H."/>
            <person name="Barnstead M."/>
            <person name="Chin S."/>
            <person name="Evans C.A."/>
            <person name="Ferriera S."/>
            <person name="Fosler C."/>
            <person name="Glodek A."/>
            <person name="Gu Z."/>
            <person name="Jennings D."/>
            <person name="Kraft C.L."/>
            <person name="Nguyen T."/>
            <person name="Pfannkoch C.M."/>
            <person name="Sitter C."/>
            <person name="Sutton G.G."/>
            <person name="Venter J.C."/>
            <person name="Woodage T."/>
            <person name="Smith D."/>
            <person name="Lee H.-M."/>
            <person name="Gustafson E."/>
            <person name="Cahill P."/>
            <person name="Kana A."/>
            <person name="Doucette-Stamm L."/>
            <person name="Weinstock K."/>
            <person name="Fechtel K."/>
            <person name="Weiss R.B."/>
            <person name="Dunn D.M."/>
            <person name="Green E.D."/>
            <person name="Blakesley R.W."/>
            <person name="Bouffard G.G."/>
            <person name="De Jong P.J."/>
            <person name="Osoegawa K."/>
            <person name="Zhu B."/>
            <person name="Marra M."/>
            <person name="Schein J."/>
            <person name="Bosdet I."/>
            <person name="Fjell C."/>
            <person name="Jones S."/>
            <person name="Krzywinski M."/>
            <person name="Mathewson C."/>
            <person name="Siddiqui A."/>
            <person name="Wye N."/>
            <person name="McPherson J."/>
            <person name="Zhao S."/>
            <person name="Fraser C.M."/>
            <person name="Shetty J."/>
            <person name="Shatsman S."/>
            <person name="Geer K."/>
            <person name="Chen Y."/>
            <person name="Abramzon S."/>
            <person name="Nierman W.C."/>
            <person name="Havlak P.H."/>
            <person name="Chen R."/>
            <person name="Durbin K.J."/>
            <person name="Egan A."/>
            <person name="Ren Y."/>
            <person name="Song X.-Z."/>
            <person name="Li B."/>
            <person name="Liu Y."/>
            <person name="Qin X."/>
            <person name="Cawley S."/>
            <person name="Cooney A.J."/>
            <person name="D'Souza L.M."/>
            <person name="Martin K."/>
            <person name="Wu J.Q."/>
            <person name="Gonzalez-Garay M.L."/>
            <person name="Jackson A.R."/>
            <person name="Kalafus K.J."/>
            <person name="McLeod M.P."/>
            <person name="Milosavljevic A."/>
            <person name="Virk D."/>
            <person name="Volkov A."/>
            <person name="Wheeler D.A."/>
            <person name="Zhang Z."/>
            <person name="Bailey J.A."/>
            <person name="Eichler E.E."/>
            <person name="Tuzun E."/>
            <person name="Birney E."/>
            <person name="Mongin E."/>
            <person name="Ureta-Vidal A."/>
            <person name="Woodwark C."/>
            <person name="Zdobnov E."/>
            <person name="Bork P."/>
            <person name="Suyama M."/>
            <person name="Torrents D."/>
            <person name="Alexandersson M."/>
            <person name="Trask B.J."/>
            <person name="Young J.M."/>
            <person name="Huang H."/>
            <person name="Wang H."/>
            <person name="Xing H."/>
            <person name="Daniels S."/>
            <person name="Gietzen D."/>
            <person name="Schmidt J."/>
            <person name="Stevens K."/>
            <person name="Vitt U."/>
            <person name="Wingrove J."/>
            <person name="Camara F."/>
            <person name="Mar Alba M."/>
            <person name="Abril J.F."/>
            <person name="Guigo R."/>
            <person name="Smit A."/>
            <person name="Dubchak I."/>
            <person name="Rubin E.M."/>
            <person name="Couronne O."/>
            <person name="Poliakov A."/>
            <person name="Huebner N."/>
            <person name="Ganten D."/>
            <person name="Goesele C."/>
            <person name="Hummel O."/>
            <person name="Kreitler T."/>
            <person name="Lee Y.-A."/>
            <person name="Monti J."/>
            <person name="Schulz H."/>
            <person name="Zimdahl H."/>
            <person name="Himmelbauer H."/>
            <person name="Lehrach H."/>
            <person name="Jacob H.J."/>
            <person name="Bromberg S."/>
            <person name="Gullings-Handley J."/>
            <person name="Jensen-Seaman M.I."/>
            <person name="Kwitek A.E."/>
            <person name="Lazar J."/>
            <person name="Pasko D."/>
            <person name="Tonellato P.J."/>
            <person name="Twigger S."/>
            <person name="Ponting C.P."/>
            <person name="Duarte J.M."/>
            <person name="Rice S."/>
            <person name="Goodstadt L."/>
            <person name="Beatson S.A."/>
            <person name="Emes R.D."/>
            <person name="Winter E.E."/>
            <person name="Webber C."/>
            <person name="Brandt P."/>
            <person name="Nyakatura G."/>
            <person name="Adetobi M."/>
            <person name="Chiaromonte F."/>
            <person name="Elnitski L."/>
            <person name="Eswara P."/>
            <person name="Hardison R.C."/>
            <person name="Hou M."/>
            <person name="Kolbe D."/>
            <person name="Makova K."/>
            <person name="Miller W."/>
            <person name="Nekrutenko A."/>
            <person name="Riemer C."/>
            <person name="Schwartz S."/>
            <person name="Taylor J."/>
            <person name="Yang S."/>
            <person name="Zhang Y."/>
            <person name="Lindpaintner K."/>
            <person name="Andrews T.D."/>
            <person name="Caccamo M."/>
            <person name="Clamp M."/>
            <person name="Clarke L."/>
            <person name="Curwen V."/>
            <person name="Durbin R.M."/>
            <person name="Eyras E."/>
            <person name="Searle S.M."/>
            <person name="Cooper G.M."/>
            <person name="Batzoglou S."/>
            <person name="Brudno M."/>
            <person name="Sidow A."/>
            <person name="Stone E.A."/>
            <person name="Payseur B.A."/>
            <person name="Bourque G."/>
            <person name="Lopez-Otin C."/>
            <person name="Puente X.S."/>
            <person name="Chakrabarti K."/>
            <person name="Chatterji S."/>
            <person name="Dewey C."/>
            <person name="Pachter L."/>
            <person name="Bray N."/>
            <person name="Yap V.B."/>
            <person name="Caspi A."/>
            <person name="Tesler G."/>
            <person name="Pevzner P.A."/>
            <person name="Haussler D."/>
            <person name="Roskin K.M."/>
            <person name="Baertsch R."/>
            <person name="Clawson H."/>
            <person name="Furey T.S."/>
            <person name="Hinrichs A.S."/>
            <person name="Karolchik D."/>
            <person name="Kent W.J."/>
            <person name="Rosenbloom K.R."/>
            <person name="Trumbower H."/>
            <person name="Weirauch M."/>
            <person name="Cooper D.N."/>
            <person name="Stenson P.D."/>
            <person name="Ma B."/>
            <person name="Brent M."/>
            <person name="Arumugam M."/>
            <person name="Shteynberg D."/>
            <person name="Copley R.R."/>
            <person name="Taylor M.S."/>
            <person name="Riethman H."/>
            <person name="Mudunuri U."/>
            <person name="Peterson J."/>
            <person name="Guyer M."/>
            <person name="Felsenfeld A."/>
            <person name="Old S."/>
            <person name="Mockrin S."/>
            <person name="Collins F.S."/>
        </authorList>
    </citation>
    <scope>NUCLEOTIDE SEQUENCE [LARGE SCALE GENOMIC DNA]</scope>
    <source>
        <strain>Brown Norway</strain>
    </source>
</reference>
<reference key="5">
    <citation type="journal article" date="2005" name="Genome Res.">
        <title>Gene and alternative splicing annotation with AIR.</title>
        <authorList>
            <person name="Florea L."/>
            <person name="Di Francesco V."/>
            <person name="Miller J."/>
            <person name="Turner R."/>
            <person name="Yao A."/>
            <person name="Harris M."/>
            <person name="Walenz B."/>
            <person name="Mobarry C."/>
            <person name="Merkulov G.V."/>
            <person name="Charlab R."/>
            <person name="Dew I."/>
            <person name="Deng Z."/>
            <person name="Istrail S."/>
            <person name="Li P."/>
            <person name="Sutton G."/>
        </authorList>
    </citation>
    <scope>NUCLEOTIDE SEQUENCE [LARGE SCALE GENOMIC DNA]</scope>
    <source>
        <strain>Brown Norway</strain>
    </source>
</reference>
<reference key="6">
    <citation type="submission" date="2005-07" db="EMBL/GenBank/DDBJ databases">
        <authorList>
            <person name="Mural R.J."/>
            <person name="Adams M.D."/>
            <person name="Myers E.W."/>
            <person name="Smith H.O."/>
            <person name="Venter J.C."/>
        </authorList>
    </citation>
    <scope>NUCLEOTIDE SEQUENCE [GENOMIC DNA]</scope>
    <source>
        <strain evidence="12">Brown Norway</strain>
    </source>
</reference>
<reference key="7">
    <citation type="journal article" date="2018" name="Hum. Mol. Genet.">
        <title>SLC25A10 biallelic mutations in intractable epileptic encephalopathy with complex I deficiency.</title>
        <authorList>
            <person name="Punzi G."/>
            <person name="Porcelli V."/>
            <person name="Ruggiu M."/>
            <person name="Hossain M.F."/>
            <person name="Menga A."/>
            <person name="Scarcia P."/>
            <person name="Castegna A."/>
            <person name="Gorgoglione R."/>
            <person name="Pierri C.L."/>
            <person name="Laera L."/>
            <person name="Lasorsa F.M."/>
            <person name="Paradies E."/>
            <person name="Pisano I."/>
            <person name="Marobbio C.M.T."/>
            <person name="Lamantea E."/>
            <person name="Ghezzi D."/>
            <person name="Tiranti V."/>
            <person name="Giannattasio S."/>
            <person name="Donati M.A."/>
            <person name="Guerrini R."/>
            <person name="Palmieri L."/>
            <person name="Palmieri F."/>
            <person name="De Grassi A."/>
        </authorList>
    </citation>
    <scope>FUNCTION</scope>
    <scope>TRANSPORT ACTIVITY</scope>
</reference>
<reference key="8">
    <citation type="journal article" date="1988" name="Biochim. Biophys. Acta">
        <title>Purification and reconstitution of two anion carriers from rat liver mitochondria: the dicarboxylate and the 2-oxoglutarate carrier.</title>
        <authorList>
            <person name="Bisaccia F."/>
            <person name="Indiveri C."/>
            <person name="Palmieri F."/>
        </authorList>
    </citation>
    <scope>FUNCTION</scope>
    <scope>TRANSPORT ACTIVITY</scope>
    <scope>SUBCELLULAR LOCATION</scope>
</reference>
<feature type="chain" id="PRO_0000456253" description="Mitochondrial dicarboxylate carrier">
    <location>
        <begin position="1"/>
        <end position="286"/>
    </location>
</feature>
<feature type="transmembrane region" description="Helical; Name=1" evidence="2">
    <location>
        <begin position="9"/>
        <end position="29"/>
    </location>
</feature>
<feature type="transmembrane region" description="Helical; Name=2" evidence="2">
    <location>
        <begin position="62"/>
        <end position="81"/>
    </location>
</feature>
<feature type="transmembrane region" description="Helical; Name=3" evidence="2">
    <location>
        <begin position="102"/>
        <end position="122"/>
    </location>
</feature>
<feature type="transmembrane region" description="Helical; Name=4" evidence="2">
    <location>
        <begin position="162"/>
        <end position="181"/>
    </location>
</feature>
<feature type="transmembrane region" description="Helical; Name=5" evidence="2">
    <location>
        <begin position="202"/>
        <end position="222"/>
    </location>
</feature>
<feature type="transmembrane region" description="Helical; Name=6" evidence="2">
    <location>
        <begin position="254"/>
        <end position="274"/>
    </location>
</feature>
<feature type="repeat" description="Solcar 1" evidence="3">
    <location>
        <begin position="7"/>
        <end position="87"/>
    </location>
</feature>
<feature type="repeat" description="Solcar 2" evidence="3">
    <location>
        <begin position="100"/>
        <end position="187"/>
    </location>
</feature>
<feature type="repeat" description="Solcar 3" evidence="3">
    <location>
        <begin position="196"/>
        <end position="279"/>
    </location>
</feature>
<feature type="modified residue" description="N6-acetyllysine" evidence="1">
    <location>
        <position position="158"/>
    </location>
</feature>
<organism>
    <name type="scientific">Rattus norvegicus</name>
    <name type="common">Rat</name>
    <dbReference type="NCBI Taxonomy" id="10116"/>
    <lineage>
        <taxon>Eukaryota</taxon>
        <taxon>Metazoa</taxon>
        <taxon>Chordata</taxon>
        <taxon>Craniata</taxon>
        <taxon>Vertebrata</taxon>
        <taxon>Euteleostomi</taxon>
        <taxon>Mammalia</taxon>
        <taxon>Eutheria</taxon>
        <taxon>Euarchontoglires</taxon>
        <taxon>Glires</taxon>
        <taxon>Rodentia</taxon>
        <taxon>Myomorpha</taxon>
        <taxon>Muroidea</taxon>
        <taxon>Muridae</taxon>
        <taxon>Murinae</taxon>
        <taxon>Rattus</taxon>
    </lineage>
</organism>
<evidence type="ECO:0000250" key="1">
    <source>
        <dbReference type="UniProtKB" id="Q9QZD8"/>
    </source>
</evidence>
<evidence type="ECO:0000255" key="2"/>
<evidence type="ECO:0000255" key="3">
    <source>
        <dbReference type="PROSITE-ProRule" id="PRU00282"/>
    </source>
</evidence>
<evidence type="ECO:0000269" key="4">
    <source>
    </source>
</evidence>
<evidence type="ECO:0000269" key="5">
    <source>
    </source>
</evidence>
<evidence type="ECO:0000269" key="6">
    <source>
    </source>
</evidence>
<evidence type="ECO:0000303" key="7">
    <source>
    </source>
</evidence>
<evidence type="ECO:0000305" key="8"/>
<evidence type="ECO:0000305" key="9">
    <source>
    </source>
</evidence>
<evidence type="ECO:0000312" key="10">
    <source>
        <dbReference type="EMBL" id="AAH81734.1"/>
    </source>
</evidence>
<evidence type="ECO:0000312" key="11">
    <source>
        <dbReference type="EMBL" id="CAA11278.1"/>
    </source>
</evidence>
<evidence type="ECO:0000312" key="12">
    <source>
        <dbReference type="EMBL" id="EDM06845.1"/>
    </source>
</evidence>
<evidence type="ECO:0000312" key="13">
    <source>
        <dbReference type="RGD" id="621430"/>
    </source>
</evidence>
<name>DIC_RAT</name>
<gene>
    <name evidence="10 13" type="primary">Slc25a10</name>
</gene>
<comment type="function">
    <text evidence="1 4 5 6">Catalyzes the electroneutral exchange or flux of physiologically important metabolites such as dicarboxylates (malonate, malate, succinate), inorganic sulfur-containing anions, and phosphate, across mitochondrial inner membrane (PubMed:29211846, PubMed:3355813, PubMed:9733776). Plays an important role in gluconeogenesis, fatty acid metabolism, urea synthesis, and sulfur metabolism, particularly in liver, by supplying the substrates for the different metabolic processes (PubMed:9733776). Regulates fatty acid release from adipocytes, and contributes to systemic insulin sensitivity (By similarity).</text>
</comment>
<comment type="catalytic activity">
    <reaction evidence="4 5 6">
        <text>(S)-malate(in) + phosphate(out) = (S)-malate(out) + phosphate(in)</text>
        <dbReference type="Rhea" id="RHEA:71607"/>
        <dbReference type="ChEBI" id="CHEBI:15589"/>
        <dbReference type="ChEBI" id="CHEBI:43474"/>
    </reaction>
</comment>
<comment type="catalytic activity">
    <reaction evidence="5 6">
        <text>malonate(out) + (S)-malate(in) = malonate(in) + (S)-malate(out)</text>
        <dbReference type="Rhea" id="RHEA:71611"/>
        <dbReference type="ChEBI" id="CHEBI:15589"/>
        <dbReference type="ChEBI" id="CHEBI:15792"/>
    </reaction>
</comment>
<comment type="catalytic activity">
    <reaction evidence="5 6">
        <text>(S)-malate(in) + succinate(out) = (S)-malate(out) + succinate(in)</text>
        <dbReference type="Rhea" id="RHEA:29327"/>
        <dbReference type="ChEBI" id="CHEBI:15589"/>
        <dbReference type="ChEBI" id="CHEBI:30031"/>
    </reaction>
</comment>
<comment type="catalytic activity">
    <reaction evidence="5 6">
        <text>(S)-malate(in) + sulfate(out) = (S)-malate(out) + sulfate(in)</text>
        <dbReference type="Rhea" id="RHEA:71615"/>
        <dbReference type="ChEBI" id="CHEBI:15589"/>
        <dbReference type="ChEBI" id="CHEBI:16189"/>
    </reaction>
</comment>
<comment type="catalytic activity">
    <reaction evidence="5 6">
        <text>malonate(out) + phosphate(in) = malonate(in) + phosphate(out)</text>
        <dbReference type="Rhea" id="RHEA:71623"/>
        <dbReference type="ChEBI" id="CHEBI:15792"/>
        <dbReference type="ChEBI" id="CHEBI:43474"/>
    </reaction>
</comment>
<comment type="catalytic activity">
    <reaction evidence="5 6">
        <text>succinate(out) + phosphate(in) = succinate(in) + phosphate(out)</text>
        <dbReference type="Rhea" id="RHEA:71627"/>
        <dbReference type="ChEBI" id="CHEBI:30031"/>
        <dbReference type="ChEBI" id="CHEBI:43474"/>
    </reaction>
</comment>
<comment type="catalytic activity">
    <reaction evidence="5 6">
        <text>sulfate(out) + phosphate(in) = sulfate(in) + phosphate(out)</text>
        <dbReference type="Rhea" id="RHEA:71631"/>
        <dbReference type="ChEBI" id="CHEBI:16189"/>
        <dbReference type="ChEBI" id="CHEBI:43474"/>
    </reaction>
</comment>
<comment type="catalytic activity">
    <reaction evidence="1">
        <text>malonate(out) + succinate(in) = malonate(in) + succinate(out)</text>
        <dbReference type="Rhea" id="RHEA:71667"/>
        <dbReference type="ChEBI" id="CHEBI:15792"/>
        <dbReference type="ChEBI" id="CHEBI:30031"/>
    </reaction>
</comment>
<comment type="subcellular location">
    <subcellularLocation>
        <location evidence="9">Mitochondrion inner membrane</location>
        <topology>Multi-pass membrane protein</topology>
    </subcellularLocation>
</comment>
<comment type="tissue specificity">
    <text evidence="6">Expressed most strongly in liver, then kidney, and at lower levels in heart and brain.</text>
</comment>
<comment type="similarity">
    <text evidence="8">Belongs to the mitochondrial carrier (TC 2.A.29) family.</text>
</comment>
<proteinExistence type="evidence at transcript level"/>
<dbReference type="EMBL" id="BC081734">
    <property type="protein sequence ID" value="AAH81734.1"/>
    <property type="molecule type" value="mRNA"/>
</dbReference>
<dbReference type="EMBL" id="AJ223355">
    <property type="protein sequence ID" value="CAA11278.1"/>
    <property type="molecule type" value="mRNA"/>
</dbReference>
<dbReference type="EMBL" id="CH473948">
    <property type="protein sequence ID" value="EDM06845.1"/>
    <property type="molecule type" value="Genomic_DNA"/>
</dbReference>
<dbReference type="RefSeq" id="NP_596909.1">
    <property type="nucleotide sequence ID" value="NM_133418.2"/>
</dbReference>
<dbReference type="SMR" id="O89035"/>
<dbReference type="FunCoup" id="O89035">
    <property type="interactions" value="609"/>
</dbReference>
<dbReference type="IntAct" id="O89035">
    <property type="interactions" value="2"/>
</dbReference>
<dbReference type="STRING" id="10116.ENSRNOP00000051846"/>
<dbReference type="TCDB" id="2.A.29.2.2">
    <property type="family name" value="the mitochondrial carrier (mc) family"/>
</dbReference>
<dbReference type="CarbonylDB" id="O89035"/>
<dbReference type="iPTMnet" id="O89035"/>
<dbReference type="PhosphoSitePlus" id="O89035"/>
<dbReference type="jPOST" id="O89035"/>
<dbReference type="PaxDb" id="10116-ENSRNOP00000051846"/>
<dbReference type="Ensembl" id="ENSRNOT00000054963.3">
    <property type="protein sequence ID" value="ENSRNOP00000051846.1"/>
    <property type="gene ID" value="ENSRNOG00000036693.3"/>
</dbReference>
<dbReference type="GeneID" id="170943"/>
<dbReference type="KEGG" id="rno:170943"/>
<dbReference type="AGR" id="RGD:621430"/>
<dbReference type="CTD" id="1468"/>
<dbReference type="RGD" id="621430">
    <property type="gene designation" value="Slc25a10"/>
</dbReference>
<dbReference type="eggNOG" id="KOG0759">
    <property type="taxonomic scope" value="Eukaryota"/>
</dbReference>
<dbReference type="GeneTree" id="ENSGT00940000156783"/>
<dbReference type="HOGENOM" id="CLU_015166_14_1_1"/>
<dbReference type="InParanoid" id="O89035"/>
<dbReference type="OMA" id="TTRFGAY"/>
<dbReference type="OrthoDB" id="448427at2759"/>
<dbReference type="TreeFam" id="TF312920"/>
<dbReference type="Reactome" id="R-RNO-1614517">
    <property type="pathway name" value="Sulfide oxidation to sulfate"/>
</dbReference>
<dbReference type="Reactome" id="R-RNO-428643">
    <property type="pathway name" value="Organic anion transporters"/>
</dbReference>
<dbReference type="PRO" id="PR:O89035"/>
<dbReference type="Proteomes" id="UP000002494">
    <property type="component" value="Chromosome 10"/>
</dbReference>
<dbReference type="Proteomes" id="UP000234681">
    <property type="component" value="Chromosome 10"/>
</dbReference>
<dbReference type="Bgee" id="ENSRNOG00000036693">
    <property type="expression patterns" value="Expressed in kidney and 20 other cell types or tissues"/>
</dbReference>
<dbReference type="GO" id="GO:0005743">
    <property type="term" value="C:mitochondrial inner membrane"/>
    <property type="evidence" value="ECO:0000266"/>
    <property type="project" value="RGD"/>
</dbReference>
<dbReference type="GO" id="GO:0005739">
    <property type="term" value="C:mitochondrion"/>
    <property type="evidence" value="ECO:0000266"/>
    <property type="project" value="RGD"/>
</dbReference>
<dbReference type="GO" id="GO:0015297">
    <property type="term" value="F:antiporter activity"/>
    <property type="evidence" value="ECO:0007669"/>
    <property type="project" value="UniProtKB-KW"/>
</dbReference>
<dbReference type="GO" id="GO:0005310">
    <property type="term" value="F:dicarboxylic acid transmembrane transporter activity"/>
    <property type="evidence" value="ECO:0000266"/>
    <property type="project" value="RGD"/>
</dbReference>
<dbReference type="GO" id="GO:0015140">
    <property type="term" value="F:malate transmembrane transporter activity"/>
    <property type="evidence" value="ECO:0000314"/>
    <property type="project" value="RGD"/>
</dbReference>
<dbReference type="GO" id="GO:0015131">
    <property type="term" value="F:oxaloacetate transmembrane transporter activity"/>
    <property type="evidence" value="ECO:0000318"/>
    <property type="project" value="GO_Central"/>
</dbReference>
<dbReference type="GO" id="GO:0005315">
    <property type="term" value="F:phosphate transmembrane transporter activity"/>
    <property type="evidence" value="ECO:0000314"/>
    <property type="project" value="RGD"/>
</dbReference>
<dbReference type="GO" id="GO:0015291">
    <property type="term" value="F:secondary active transmembrane transporter activity"/>
    <property type="evidence" value="ECO:0000266"/>
    <property type="project" value="RGD"/>
</dbReference>
<dbReference type="GO" id="GO:0015141">
    <property type="term" value="F:succinate transmembrane transporter activity"/>
    <property type="evidence" value="ECO:0000318"/>
    <property type="project" value="GO_Central"/>
</dbReference>
<dbReference type="GO" id="GO:0015116">
    <property type="term" value="F:sulfate transmembrane transporter activity"/>
    <property type="evidence" value="ECO:0000318"/>
    <property type="project" value="GO_Central"/>
</dbReference>
<dbReference type="GO" id="GO:0015117">
    <property type="term" value="F:thiosulfate transmembrane transporter activity"/>
    <property type="evidence" value="ECO:0000318"/>
    <property type="project" value="GO_Central"/>
</dbReference>
<dbReference type="GO" id="GO:0046166">
    <property type="term" value="P:glyceraldehyde-3-phosphate biosynthetic process"/>
    <property type="evidence" value="ECO:0000266"/>
    <property type="project" value="RGD"/>
</dbReference>
<dbReference type="GO" id="GO:0006869">
    <property type="term" value="P:lipid transport"/>
    <property type="evidence" value="ECO:0007669"/>
    <property type="project" value="UniProtKB-KW"/>
</dbReference>
<dbReference type="GO" id="GO:0071423">
    <property type="term" value="P:malate transmembrane transport"/>
    <property type="evidence" value="ECO:0000318"/>
    <property type="project" value="GO_Central"/>
</dbReference>
<dbReference type="GO" id="GO:0015743">
    <property type="term" value="P:malate transport"/>
    <property type="evidence" value="ECO:0000314"/>
    <property type="project" value="RGD"/>
</dbReference>
<dbReference type="GO" id="GO:0015729">
    <property type="term" value="P:oxaloacetate transport"/>
    <property type="evidence" value="ECO:0000318"/>
    <property type="project" value="GO_Central"/>
</dbReference>
<dbReference type="GO" id="GO:0035435">
    <property type="term" value="P:phosphate ion transmembrane transport"/>
    <property type="evidence" value="ECO:0000318"/>
    <property type="project" value="GO_Central"/>
</dbReference>
<dbReference type="GO" id="GO:0006817">
    <property type="term" value="P:phosphate ion transport"/>
    <property type="evidence" value="ECO:0000314"/>
    <property type="project" value="RGD"/>
</dbReference>
<dbReference type="GO" id="GO:0071422">
    <property type="term" value="P:succinate transmembrane transport"/>
    <property type="evidence" value="ECO:0000318"/>
    <property type="project" value="GO_Central"/>
</dbReference>
<dbReference type="GO" id="GO:1902358">
    <property type="term" value="P:sulfate transmembrane transport"/>
    <property type="evidence" value="ECO:0000318"/>
    <property type="project" value="GO_Central"/>
</dbReference>
<dbReference type="GO" id="GO:0015709">
    <property type="term" value="P:thiosulfate transport"/>
    <property type="evidence" value="ECO:0000318"/>
    <property type="project" value="GO_Central"/>
</dbReference>
<dbReference type="FunFam" id="1.50.40.10:FF:000043">
    <property type="entry name" value="mitochondrial dicarboxylate carrier isoform X2"/>
    <property type="match status" value="1"/>
</dbReference>
<dbReference type="Gene3D" id="1.50.40.10">
    <property type="entry name" value="Mitochondrial carrier domain"/>
    <property type="match status" value="1"/>
</dbReference>
<dbReference type="InterPro" id="IPR002067">
    <property type="entry name" value="Mit_carrier"/>
</dbReference>
<dbReference type="InterPro" id="IPR050391">
    <property type="entry name" value="Mito_Metabolite_Transporter"/>
</dbReference>
<dbReference type="InterPro" id="IPR018108">
    <property type="entry name" value="Mitochondrial_sb/sol_carrier"/>
</dbReference>
<dbReference type="InterPro" id="IPR023395">
    <property type="entry name" value="Mt_carrier_dom_sf"/>
</dbReference>
<dbReference type="PANTHER" id="PTHR45618">
    <property type="entry name" value="MITOCHONDRIAL DICARBOXYLATE CARRIER-RELATED"/>
    <property type="match status" value="1"/>
</dbReference>
<dbReference type="Pfam" id="PF00153">
    <property type="entry name" value="Mito_carr"/>
    <property type="match status" value="3"/>
</dbReference>
<dbReference type="PRINTS" id="PR00784">
    <property type="entry name" value="MTUNCOUPLING"/>
</dbReference>
<dbReference type="SUPFAM" id="SSF103506">
    <property type="entry name" value="Mitochondrial carrier"/>
    <property type="match status" value="1"/>
</dbReference>
<dbReference type="PROSITE" id="PS50920">
    <property type="entry name" value="SOLCAR"/>
    <property type="match status" value="3"/>
</dbReference>
<keyword id="KW-0007">Acetylation</keyword>
<keyword id="KW-0050">Antiport</keyword>
<keyword id="KW-0445">Lipid transport</keyword>
<keyword id="KW-0472">Membrane</keyword>
<keyword id="KW-0496">Mitochondrion</keyword>
<keyword id="KW-0999">Mitochondrion inner membrane</keyword>
<keyword id="KW-1185">Reference proteome</keyword>
<keyword id="KW-0677">Repeat</keyword>
<keyword id="KW-0812">Transmembrane</keyword>
<keyword id="KW-1133">Transmembrane helix</keyword>
<keyword id="KW-0813">Transport</keyword>
<sequence length="286" mass="31455">MAEARTSRWYFGGLASCGAACCTHPLDLLKVHLQTQQEVKLRMTGMALQVVRTDGFLALYNGLSASLCRQMTYSLTRFAIYETMRDYMTKDSQGPLPFYSKVLLGGISGLTGGFVGTPADLVNVRMQNDMKLPLSQRRNYSHALDGLYRVAREEGLKKLFSGATMASSRGALVTVGQLSCYDQAKQLVLSTGYLSDNIFTHFLSSFIAGGCATFLCQPLDVLKTRLMNSKGEYQGVFHCAVETAKLGPQAFFKGLVPAGVRLVPHTVLTFMFLEQLRKHFGIKVAT</sequence>
<protein>
    <recommendedName>
        <fullName evidence="7">Mitochondrial dicarboxylate carrier</fullName>
        <shortName>DIC</shortName>
    </recommendedName>
    <alternativeName>
        <fullName>Solute carrier family 25 member 10</fullName>
    </alternativeName>
</protein>
<accession>O89035</accession>